<proteinExistence type="inferred from homology"/>
<comment type="function">
    <text evidence="1">This protein is located at the 30S-50S ribosomal subunit interface and may play a role in the structure and function of the aminoacyl-tRNA binding site.</text>
</comment>
<comment type="similarity">
    <text evidence="1">Belongs to the bacterial ribosomal protein bL19 family.</text>
</comment>
<reference key="1">
    <citation type="journal article" date="2005" name="Arch. Microbiol.">
        <title>The genome sequence of an anaerobic aromatic-degrading denitrifying bacterium, strain EbN1.</title>
        <authorList>
            <person name="Rabus R."/>
            <person name="Kube M."/>
            <person name="Heider J."/>
            <person name="Beck A."/>
            <person name="Heitmann K."/>
            <person name="Widdel F."/>
            <person name="Reinhardt R."/>
        </authorList>
    </citation>
    <scope>NUCLEOTIDE SEQUENCE [LARGE SCALE GENOMIC DNA]</scope>
    <source>
        <strain>DSM 19018 / LMG 30748 / EbN1</strain>
    </source>
</reference>
<sequence length="128" mass="14577">MNLIQQLEQEEIARLTQNKTIPAFAPGDTVIVQVKVKEGTRERLQAYEGVVIAKRNRGLNSNFIVRKISSGEGVERTFQTYSPLVDSIEVKRRGDVRRAKLYYLRERSGKSARIKEKLNYKAPAAKKA</sequence>
<keyword id="KW-1185">Reference proteome</keyword>
<keyword id="KW-0687">Ribonucleoprotein</keyword>
<keyword id="KW-0689">Ribosomal protein</keyword>
<evidence type="ECO:0000255" key="1">
    <source>
        <dbReference type="HAMAP-Rule" id="MF_00402"/>
    </source>
</evidence>
<evidence type="ECO:0000305" key="2"/>
<gene>
    <name evidence="1" type="primary">rplS</name>
    <name type="ordered locus">AZOSEA40650</name>
    <name type="ORF">ebA7169</name>
</gene>
<organism>
    <name type="scientific">Aromatoleum aromaticum (strain DSM 19018 / LMG 30748 / EbN1)</name>
    <name type="common">Azoarcus sp. (strain EbN1)</name>
    <dbReference type="NCBI Taxonomy" id="76114"/>
    <lineage>
        <taxon>Bacteria</taxon>
        <taxon>Pseudomonadati</taxon>
        <taxon>Pseudomonadota</taxon>
        <taxon>Betaproteobacteria</taxon>
        <taxon>Rhodocyclales</taxon>
        <taxon>Rhodocyclaceae</taxon>
        <taxon>Aromatoleum</taxon>
    </lineage>
</organism>
<protein>
    <recommendedName>
        <fullName evidence="1">Large ribosomal subunit protein bL19</fullName>
    </recommendedName>
    <alternativeName>
        <fullName evidence="2">50S ribosomal protein L19</fullName>
    </alternativeName>
</protein>
<dbReference type="EMBL" id="CR555306">
    <property type="protein sequence ID" value="CAI10190.1"/>
    <property type="molecule type" value="Genomic_DNA"/>
</dbReference>
<dbReference type="RefSeq" id="WP_011239835.1">
    <property type="nucleotide sequence ID" value="NC_006513.1"/>
</dbReference>
<dbReference type="SMR" id="Q5NXM4"/>
<dbReference type="STRING" id="76114.ebA7169"/>
<dbReference type="KEGG" id="eba:ebA7169"/>
<dbReference type="eggNOG" id="COG0335">
    <property type="taxonomic scope" value="Bacteria"/>
</dbReference>
<dbReference type="HOGENOM" id="CLU_103507_1_0_4"/>
<dbReference type="OrthoDB" id="9803541at2"/>
<dbReference type="Proteomes" id="UP000006552">
    <property type="component" value="Chromosome"/>
</dbReference>
<dbReference type="GO" id="GO:0022625">
    <property type="term" value="C:cytosolic large ribosomal subunit"/>
    <property type="evidence" value="ECO:0007669"/>
    <property type="project" value="TreeGrafter"/>
</dbReference>
<dbReference type="GO" id="GO:0003735">
    <property type="term" value="F:structural constituent of ribosome"/>
    <property type="evidence" value="ECO:0007669"/>
    <property type="project" value="InterPro"/>
</dbReference>
<dbReference type="GO" id="GO:0006412">
    <property type="term" value="P:translation"/>
    <property type="evidence" value="ECO:0007669"/>
    <property type="project" value="UniProtKB-UniRule"/>
</dbReference>
<dbReference type="FunFam" id="2.30.30.790:FF:000001">
    <property type="entry name" value="50S ribosomal protein L19"/>
    <property type="match status" value="1"/>
</dbReference>
<dbReference type="Gene3D" id="2.30.30.790">
    <property type="match status" value="1"/>
</dbReference>
<dbReference type="HAMAP" id="MF_00402">
    <property type="entry name" value="Ribosomal_bL19"/>
    <property type="match status" value="1"/>
</dbReference>
<dbReference type="InterPro" id="IPR001857">
    <property type="entry name" value="Ribosomal_bL19"/>
</dbReference>
<dbReference type="InterPro" id="IPR018257">
    <property type="entry name" value="Ribosomal_bL19_CS"/>
</dbReference>
<dbReference type="InterPro" id="IPR038657">
    <property type="entry name" value="Ribosomal_bL19_sf"/>
</dbReference>
<dbReference type="InterPro" id="IPR008991">
    <property type="entry name" value="Translation_prot_SH3-like_sf"/>
</dbReference>
<dbReference type="NCBIfam" id="TIGR01024">
    <property type="entry name" value="rplS_bact"/>
    <property type="match status" value="1"/>
</dbReference>
<dbReference type="PANTHER" id="PTHR15680:SF9">
    <property type="entry name" value="LARGE RIBOSOMAL SUBUNIT PROTEIN BL19M"/>
    <property type="match status" value="1"/>
</dbReference>
<dbReference type="PANTHER" id="PTHR15680">
    <property type="entry name" value="RIBOSOMAL PROTEIN L19"/>
    <property type="match status" value="1"/>
</dbReference>
<dbReference type="Pfam" id="PF01245">
    <property type="entry name" value="Ribosomal_L19"/>
    <property type="match status" value="1"/>
</dbReference>
<dbReference type="PIRSF" id="PIRSF002191">
    <property type="entry name" value="Ribosomal_L19"/>
    <property type="match status" value="1"/>
</dbReference>
<dbReference type="PRINTS" id="PR00061">
    <property type="entry name" value="RIBOSOMALL19"/>
</dbReference>
<dbReference type="SUPFAM" id="SSF50104">
    <property type="entry name" value="Translation proteins SH3-like domain"/>
    <property type="match status" value="1"/>
</dbReference>
<dbReference type="PROSITE" id="PS01015">
    <property type="entry name" value="RIBOSOMAL_L19"/>
    <property type="match status" value="1"/>
</dbReference>
<accession>Q5NXM4</accession>
<feature type="chain" id="PRO_0000163402" description="Large ribosomal subunit protein bL19">
    <location>
        <begin position="1"/>
        <end position="128"/>
    </location>
</feature>
<name>RL19_AROAE</name>